<accession>P58969</accession>
<protein>
    <recommendedName>
        <fullName>Monomethylamine methyltransferase MtmB</fullName>
        <shortName>MMA methyltransferase</shortName>
        <shortName>MMAMT</shortName>
        <ecNumber>2.1.1.248</ecNumber>
    </recommendedName>
</protein>
<comment type="function">
    <text evidence="1">Catalyzes the transfer of the methyl group from monomethylamine to the corrinoid cofactor of MtmC.</text>
</comment>
<comment type="catalytic activity">
    <reaction>
        <text>Co(I)-[methylamine-specific corrinoid protein] + methylamine + H(+) = methyl-Co(III)-[methylamine-specific corrinoid protein] + NH4(+)</text>
        <dbReference type="Rhea" id="RHEA:26059"/>
        <dbReference type="Rhea" id="RHEA-COMP:11120"/>
        <dbReference type="Rhea" id="RHEA-COMP:11121"/>
        <dbReference type="ChEBI" id="CHEBI:15378"/>
        <dbReference type="ChEBI" id="CHEBI:28938"/>
        <dbReference type="ChEBI" id="CHEBI:59338"/>
        <dbReference type="ChEBI" id="CHEBI:85033"/>
        <dbReference type="ChEBI" id="CHEBI:85035"/>
        <dbReference type="EC" id="2.1.1.248"/>
    </reaction>
</comment>
<comment type="pathway">
    <text>One-carbon metabolism; methanogenesis from methylamine.</text>
</comment>
<comment type="subunit">
    <text evidence="1">Can form a complex with MtmC.</text>
</comment>
<comment type="similarity">
    <text evidence="2">Belongs to the monomethylamine methyltransferase family.</text>
</comment>
<comment type="sequence caution" evidence="2">
    <conflict type="erroneous termination">
        <sequence resource="EMBL-CDS" id="AAM31132"/>
    </conflict>
    <text>Truncated C-terminus.</text>
</comment>
<comment type="sequence caution" evidence="2">
    <conflict type="erroneous termination">
        <sequence resource="EMBL-CDS" id="AAM31133"/>
    </conflict>
    <text>Truncated C-terminus.</text>
</comment>
<comment type="sequence caution" evidence="2">
    <conflict type="erroneous termination">
        <sequence resource="EMBL-CDS" id="AAM33031"/>
    </conflict>
    <text>Truncated C-terminus.</text>
</comment>
<comment type="sequence caution" evidence="2">
    <conflict type="erroneous termination">
        <sequence resource="EMBL-CDS" id="AAM33032"/>
    </conflict>
    <text>Truncated C-terminus.</text>
</comment>
<sequence length="458" mass="50367">MTFRKSFDCYDFYDRAKVGEKCTQDDWDLMKIPMKAMELKQKYGLDFKGEFVPTDKDMMEKLFQAGFEMLLECGIYCTDTHRIVKYTEDEIWDAINNVQKEFTLGTGRDAVNVRKRSVGDKRKPIVQGGPTGSPISEEVFMPVHMSYALEREVDTIVDGVMTSVRGKAPIPGSPYEVLAAKTETRLIKQACAMAGRPGMGIOGPETSLSAQGNISSDCMGGQISSDSHEVSQLNELKIDLDAIAVIAHYKGNSDIIMDEQMPIFGGYAGGIEETTIVDIATHINAFVMSSASWHLDGPVHIRWGSTNTRETLTIAGWACATISEFTDMLSGNQYYPCAGPCTEMCLLEASAQSITDTASGREILSGVASAKGVVTDKTTGMEARMMGEVARATAGMEISEVNKVLNALVPLYEKNYATAPAGKTFQECYDVKTITPTEEYMQVYDGARKKLEDLGLVF</sequence>
<gene>
    <name type="primary">mtmB1</name>
    <name type="ordered locus">MM_1436/MM_1437</name>
</gene>
<gene>
    <name type="primary">mtmB2</name>
    <name type="ordered locus">MM_3335/MM_3336</name>
</gene>
<reference key="1">
    <citation type="journal article" date="2002" name="J. Mol. Microbiol. Biotechnol.">
        <title>The genome of Methanosarcina mazei: evidence for lateral gene transfer between Bacteria and Archaea.</title>
        <authorList>
            <person name="Deppenmeier U."/>
            <person name="Johann A."/>
            <person name="Hartsch T."/>
            <person name="Merkl R."/>
            <person name="Schmitz R.A."/>
            <person name="Martinez-Arias R."/>
            <person name="Henne A."/>
            <person name="Wiezer A."/>
            <person name="Baeumer S."/>
            <person name="Jacobi C."/>
            <person name="Brueggemann H."/>
            <person name="Lienard T."/>
            <person name="Christmann A."/>
            <person name="Boemecke M."/>
            <person name="Steckel S."/>
            <person name="Bhattacharyya A."/>
            <person name="Lykidis A."/>
            <person name="Overbeek R."/>
            <person name="Klenk H.-P."/>
            <person name="Gunsalus R.P."/>
            <person name="Fritz H.-J."/>
            <person name="Gottschalk G."/>
        </authorList>
    </citation>
    <scope>NUCLEOTIDE SEQUENCE [LARGE SCALE GENOMIC DNA]</scope>
    <source>
        <strain>ATCC BAA-159 / DSM 3647 / Goe1 / Go1 / JCM 11833 / OCM 88</strain>
    </source>
</reference>
<feature type="initiator methionine" description="Removed" evidence="1">
    <location>
        <position position="1"/>
    </location>
</feature>
<feature type="chain" id="PRO_0000216557" description="Monomethylamine methyltransferase MtmB">
    <location>
        <begin position="2"/>
        <end position="458"/>
    </location>
</feature>
<feature type="non-standard amino acid" description="Pyrrolysine" evidence="1">
    <location>
        <position position="202"/>
    </location>
</feature>
<name>MTMB_METMA</name>
<keyword id="KW-0484">Methanogenesis</keyword>
<keyword id="KW-0489">Methyltransferase</keyword>
<keyword id="KW-0669">Pyrrolysine</keyword>
<keyword id="KW-0808">Transferase</keyword>
<dbReference type="EC" id="2.1.1.248"/>
<dbReference type="EMBL" id="AE008384">
    <property type="protein sequence ID" value="AAM31132.1"/>
    <property type="status" value="ALT_SEQ"/>
    <property type="molecule type" value="Genomic_DNA"/>
</dbReference>
<dbReference type="EMBL" id="AE008384">
    <property type="protein sequence ID" value="AAM31133.1"/>
    <property type="status" value="ALT_SEQ"/>
    <property type="molecule type" value="Genomic_DNA"/>
</dbReference>
<dbReference type="EMBL" id="AE008384">
    <property type="protein sequence ID" value="AAM33031.1"/>
    <property type="status" value="ALT_SEQ"/>
    <property type="molecule type" value="Genomic_DNA"/>
</dbReference>
<dbReference type="EMBL" id="AE008384">
    <property type="protein sequence ID" value="AAM33032.1"/>
    <property type="status" value="ALT_SEQ"/>
    <property type="molecule type" value="Genomic_DNA"/>
</dbReference>
<dbReference type="KEGG" id="mma:MM_1436"/>
<dbReference type="KEGG" id="mma:MM_1437"/>
<dbReference type="KEGG" id="mma:MM_3335"/>
<dbReference type="KEGG" id="mma:MM_3336"/>
<dbReference type="PATRIC" id="fig|192952.21.peg.1662"/>
<dbReference type="eggNOG" id="arCOG05143">
    <property type="taxonomic scope" value="Archaea"/>
</dbReference>
<dbReference type="HOGENOM" id="CLU_1154359_0_0_2"/>
<dbReference type="UniPathway" id="UPA00643"/>
<dbReference type="Proteomes" id="UP000000595">
    <property type="component" value="Chromosome"/>
</dbReference>
<dbReference type="GO" id="GO:0043852">
    <property type="term" value="F:monomethylamine methyltransferase activity"/>
    <property type="evidence" value="ECO:0007669"/>
    <property type="project" value="UniProtKB-EC"/>
</dbReference>
<dbReference type="GO" id="GO:0015948">
    <property type="term" value="P:methanogenesis"/>
    <property type="evidence" value="ECO:0007669"/>
    <property type="project" value="UniProtKB-KW"/>
</dbReference>
<dbReference type="GO" id="GO:0032259">
    <property type="term" value="P:methylation"/>
    <property type="evidence" value="ECO:0007669"/>
    <property type="project" value="UniProtKB-KW"/>
</dbReference>
<dbReference type="FunFam" id="3.20.20.460:FF:000001">
    <property type="entry name" value="Monomethylamine methyltransferase MtmB1"/>
    <property type="match status" value="1"/>
</dbReference>
<dbReference type="Gene3D" id="3.20.20.460">
    <property type="entry name" value="Monomethylamine methyltransferase MtmB"/>
    <property type="match status" value="1"/>
</dbReference>
<dbReference type="InterPro" id="IPR008031">
    <property type="entry name" value="MtmB_MeTrfase"/>
</dbReference>
<dbReference type="InterPro" id="IPR036655">
    <property type="entry name" value="MtmB_sf"/>
</dbReference>
<dbReference type="Pfam" id="PF05369">
    <property type="entry name" value="MtmB"/>
    <property type="match status" value="1"/>
</dbReference>
<dbReference type="SUPFAM" id="SSF75098">
    <property type="entry name" value="Monomethylamine methyltransferase MtmB"/>
    <property type="match status" value="1"/>
</dbReference>
<organism>
    <name type="scientific">Methanosarcina mazei (strain ATCC BAA-159 / DSM 3647 / Goe1 / Go1 / JCM 11833 / OCM 88)</name>
    <name type="common">Methanosarcina frisia</name>
    <dbReference type="NCBI Taxonomy" id="192952"/>
    <lineage>
        <taxon>Archaea</taxon>
        <taxon>Methanobacteriati</taxon>
        <taxon>Methanobacteriota</taxon>
        <taxon>Stenosarchaea group</taxon>
        <taxon>Methanomicrobia</taxon>
        <taxon>Methanosarcinales</taxon>
        <taxon>Methanosarcinaceae</taxon>
        <taxon>Methanosarcina</taxon>
    </lineage>
</organism>
<evidence type="ECO:0000250" key="1"/>
<evidence type="ECO:0000305" key="2"/>
<proteinExistence type="inferred from homology"/>